<name>ACP_NOVAD</name>
<feature type="chain" id="PRO_1000066646" description="Acyl carrier protein">
    <location>
        <begin position="1"/>
        <end position="78"/>
    </location>
</feature>
<feature type="domain" description="Carrier" evidence="2">
    <location>
        <begin position="2"/>
        <end position="77"/>
    </location>
</feature>
<feature type="modified residue" description="O-(pantetheine 4'-phosphoryl)serine" evidence="2">
    <location>
        <position position="37"/>
    </location>
</feature>
<reference key="1">
    <citation type="submission" date="2006-01" db="EMBL/GenBank/DDBJ databases">
        <title>Complete sequence of Novosphingobium aromaticivorans DSM 12444.</title>
        <authorList>
            <consortium name="US DOE Joint Genome Institute"/>
            <person name="Copeland A."/>
            <person name="Lucas S."/>
            <person name="Lapidus A."/>
            <person name="Barry K."/>
            <person name="Detter J.C."/>
            <person name="Glavina T."/>
            <person name="Hammon N."/>
            <person name="Israni S."/>
            <person name="Pitluck S."/>
            <person name="Chain P."/>
            <person name="Malfatti S."/>
            <person name="Shin M."/>
            <person name="Vergez L."/>
            <person name="Schmutz J."/>
            <person name="Larimer F."/>
            <person name="Land M."/>
            <person name="Kyrpides N."/>
            <person name="Ivanova N."/>
            <person name="Fredrickson J."/>
            <person name="Balkwill D."/>
            <person name="Romine M.F."/>
            <person name="Richardson P."/>
        </authorList>
    </citation>
    <scope>NUCLEOTIDE SEQUENCE [LARGE SCALE GENOMIC DNA]</scope>
    <source>
        <strain>ATCC 700278 / DSM 12444 / CCUG 56034 / CIP 105152 / NBRC 16084 / F199</strain>
    </source>
</reference>
<accession>Q2G8P0</accession>
<gene>
    <name evidence="1" type="primary">acpP</name>
    <name type="ordered locus">Saro_1339</name>
</gene>
<organism>
    <name type="scientific">Novosphingobium aromaticivorans (strain ATCC 700278 / DSM 12444 / CCUG 56034 / CIP 105152 / NBRC 16084 / F199)</name>
    <dbReference type="NCBI Taxonomy" id="279238"/>
    <lineage>
        <taxon>Bacteria</taxon>
        <taxon>Pseudomonadati</taxon>
        <taxon>Pseudomonadota</taxon>
        <taxon>Alphaproteobacteria</taxon>
        <taxon>Sphingomonadales</taxon>
        <taxon>Sphingomonadaceae</taxon>
        <taxon>Novosphingobium</taxon>
    </lineage>
</organism>
<comment type="function">
    <text evidence="1">Carrier of the growing fatty acid chain in fatty acid biosynthesis.</text>
</comment>
<comment type="pathway">
    <text evidence="1">Lipid metabolism; fatty acid biosynthesis.</text>
</comment>
<comment type="subcellular location">
    <subcellularLocation>
        <location evidence="1">Cytoplasm</location>
    </subcellularLocation>
</comment>
<comment type="PTM">
    <text evidence="1">4'-phosphopantetheine is transferred from CoA to a specific serine of apo-ACP by AcpS. This modification is essential for activity because fatty acids are bound in thioester linkage to the sulfhydryl of the prosthetic group.</text>
</comment>
<comment type="similarity">
    <text evidence="1">Belongs to the acyl carrier protein (ACP) family.</text>
</comment>
<protein>
    <recommendedName>
        <fullName evidence="1">Acyl carrier protein</fullName>
        <shortName evidence="1">ACP</shortName>
    </recommendedName>
</protein>
<evidence type="ECO:0000255" key="1">
    <source>
        <dbReference type="HAMAP-Rule" id="MF_01217"/>
    </source>
</evidence>
<evidence type="ECO:0000255" key="2">
    <source>
        <dbReference type="PROSITE-ProRule" id="PRU00258"/>
    </source>
</evidence>
<keyword id="KW-0963">Cytoplasm</keyword>
<keyword id="KW-0275">Fatty acid biosynthesis</keyword>
<keyword id="KW-0276">Fatty acid metabolism</keyword>
<keyword id="KW-0444">Lipid biosynthesis</keyword>
<keyword id="KW-0443">Lipid metabolism</keyword>
<keyword id="KW-0596">Phosphopantetheine</keyword>
<keyword id="KW-0597">Phosphoprotein</keyword>
<keyword id="KW-1185">Reference proteome</keyword>
<sequence length="78" mass="8517">MSDTADRVKKIVVEHLGVEADKVTEEASFIDDLGADSLDIVELVMAFEEEFGVEIPDDAAEKISTVSDAIKYIDENKG</sequence>
<proteinExistence type="inferred from homology"/>
<dbReference type="EMBL" id="CP000248">
    <property type="protein sequence ID" value="ABD25783.1"/>
    <property type="molecule type" value="Genomic_DNA"/>
</dbReference>
<dbReference type="RefSeq" id="WP_011444997.1">
    <property type="nucleotide sequence ID" value="NC_007794.1"/>
</dbReference>
<dbReference type="SMR" id="Q2G8P0"/>
<dbReference type="STRING" id="279238.Saro_1339"/>
<dbReference type="KEGG" id="nar:Saro_1339"/>
<dbReference type="eggNOG" id="COG0236">
    <property type="taxonomic scope" value="Bacteria"/>
</dbReference>
<dbReference type="HOGENOM" id="CLU_108696_5_1_5"/>
<dbReference type="UniPathway" id="UPA00094"/>
<dbReference type="Proteomes" id="UP000009134">
    <property type="component" value="Chromosome"/>
</dbReference>
<dbReference type="GO" id="GO:0005829">
    <property type="term" value="C:cytosol"/>
    <property type="evidence" value="ECO:0007669"/>
    <property type="project" value="TreeGrafter"/>
</dbReference>
<dbReference type="GO" id="GO:0016020">
    <property type="term" value="C:membrane"/>
    <property type="evidence" value="ECO:0007669"/>
    <property type="project" value="GOC"/>
</dbReference>
<dbReference type="GO" id="GO:0000035">
    <property type="term" value="F:acyl binding"/>
    <property type="evidence" value="ECO:0007669"/>
    <property type="project" value="TreeGrafter"/>
</dbReference>
<dbReference type="GO" id="GO:0000036">
    <property type="term" value="F:acyl carrier activity"/>
    <property type="evidence" value="ECO:0007669"/>
    <property type="project" value="UniProtKB-UniRule"/>
</dbReference>
<dbReference type="GO" id="GO:0031177">
    <property type="term" value="F:phosphopantetheine binding"/>
    <property type="evidence" value="ECO:0007669"/>
    <property type="project" value="InterPro"/>
</dbReference>
<dbReference type="GO" id="GO:0009245">
    <property type="term" value="P:lipid A biosynthetic process"/>
    <property type="evidence" value="ECO:0007669"/>
    <property type="project" value="TreeGrafter"/>
</dbReference>
<dbReference type="FunFam" id="1.10.1200.10:FF:000001">
    <property type="entry name" value="Acyl carrier protein"/>
    <property type="match status" value="1"/>
</dbReference>
<dbReference type="Gene3D" id="1.10.1200.10">
    <property type="entry name" value="ACP-like"/>
    <property type="match status" value="1"/>
</dbReference>
<dbReference type="HAMAP" id="MF_01217">
    <property type="entry name" value="Acyl_carrier"/>
    <property type="match status" value="1"/>
</dbReference>
<dbReference type="InterPro" id="IPR003231">
    <property type="entry name" value="ACP"/>
</dbReference>
<dbReference type="InterPro" id="IPR036736">
    <property type="entry name" value="ACP-like_sf"/>
</dbReference>
<dbReference type="InterPro" id="IPR020806">
    <property type="entry name" value="PKS_PP-bd"/>
</dbReference>
<dbReference type="InterPro" id="IPR009081">
    <property type="entry name" value="PP-bd_ACP"/>
</dbReference>
<dbReference type="InterPro" id="IPR006162">
    <property type="entry name" value="Ppantetheine_attach_site"/>
</dbReference>
<dbReference type="NCBIfam" id="TIGR00517">
    <property type="entry name" value="acyl_carrier"/>
    <property type="match status" value="1"/>
</dbReference>
<dbReference type="NCBIfam" id="NF002148">
    <property type="entry name" value="PRK00982.1-2"/>
    <property type="match status" value="1"/>
</dbReference>
<dbReference type="NCBIfam" id="NF002149">
    <property type="entry name" value="PRK00982.1-3"/>
    <property type="match status" value="1"/>
</dbReference>
<dbReference type="NCBIfam" id="NF002150">
    <property type="entry name" value="PRK00982.1-4"/>
    <property type="match status" value="1"/>
</dbReference>
<dbReference type="NCBIfam" id="NF002151">
    <property type="entry name" value="PRK00982.1-5"/>
    <property type="match status" value="1"/>
</dbReference>
<dbReference type="PANTHER" id="PTHR20863">
    <property type="entry name" value="ACYL CARRIER PROTEIN"/>
    <property type="match status" value="1"/>
</dbReference>
<dbReference type="PANTHER" id="PTHR20863:SF76">
    <property type="entry name" value="CARRIER DOMAIN-CONTAINING PROTEIN"/>
    <property type="match status" value="1"/>
</dbReference>
<dbReference type="Pfam" id="PF00550">
    <property type="entry name" value="PP-binding"/>
    <property type="match status" value="1"/>
</dbReference>
<dbReference type="SMART" id="SM00823">
    <property type="entry name" value="PKS_PP"/>
    <property type="match status" value="1"/>
</dbReference>
<dbReference type="SUPFAM" id="SSF47336">
    <property type="entry name" value="ACP-like"/>
    <property type="match status" value="1"/>
</dbReference>
<dbReference type="PROSITE" id="PS50075">
    <property type="entry name" value="CARRIER"/>
    <property type="match status" value="1"/>
</dbReference>
<dbReference type="PROSITE" id="PS00012">
    <property type="entry name" value="PHOSPHOPANTETHEINE"/>
    <property type="match status" value="1"/>
</dbReference>